<accession>Q8G4L4</accession>
<proteinExistence type="inferred from homology"/>
<organism>
    <name type="scientific">Bifidobacterium longum (strain NCC 2705)</name>
    <dbReference type="NCBI Taxonomy" id="206672"/>
    <lineage>
        <taxon>Bacteria</taxon>
        <taxon>Bacillati</taxon>
        <taxon>Actinomycetota</taxon>
        <taxon>Actinomycetes</taxon>
        <taxon>Bifidobacteriales</taxon>
        <taxon>Bifidobacteriaceae</taxon>
        <taxon>Bifidobacterium</taxon>
    </lineage>
</organism>
<gene>
    <name type="primary">speE</name>
    <name type="ordered locus">BL1365</name>
</gene>
<evidence type="ECO:0000250" key="1"/>
<evidence type="ECO:0000255" key="2">
    <source>
        <dbReference type="PROSITE-ProRule" id="PRU00354"/>
    </source>
</evidence>
<evidence type="ECO:0000256" key="3">
    <source>
        <dbReference type="SAM" id="MobiDB-lite"/>
    </source>
</evidence>
<evidence type="ECO:0000305" key="4"/>
<keyword id="KW-0963">Cytoplasm</keyword>
<keyword id="KW-0620">Polyamine biosynthesis</keyword>
<keyword id="KW-1185">Reference proteome</keyword>
<keyword id="KW-0745">Spermidine biosynthesis</keyword>
<keyword id="KW-0808">Transferase</keyword>
<reference key="1">
    <citation type="journal article" date="2002" name="Proc. Natl. Acad. Sci. U.S.A.">
        <title>The genome sequence of Bifidobacterium longum reflects its adaptation to the human gastrointestinal tract.</title>
        <authorList>
            <person name="Schell M.A."/>
            <person name="Karmirantzou M."/>
            <person name="Snel B."/>
            <person name="Vilanova D."/>
            <person name="Berger B."/>
            <person name="Pessi G."/>
            <person name="Zwahlen M.-C."/>
            <person name="Desiere F."/>
            <person name="Bork P."/>
            <person name="Delley M."/>
            <person name="Pridmore R.D."/>
            <person name="Arigoni F."/>
        </authorList>
    </citation>
    <scope>NUCLEOTIDE SEQUENCE [LARGE SCALE GENOMIC DNA]</scope>
    <source>
        <strain>NCC 2705</strain>
    </source>
</reference>
<sequence>MVEPAIGRNHIRAGRHHGRARIVFARTKNHAYLSHDAYCSRYPPIGRENADRLRIRTVVDRRTGRGAERWHRSPRQANGRFSNQRYSSTSPNSSPACPLIYFISIKAKRIACVVSAVIFVATSCVSPLTGFAFWETNLAYEGESIYNYLQVKNLSDRTILSTNVLFGVQSVTMKDKGLTGMYYDTALAAPALADNANSALILGMGTGTYARQLKQYYPKMNITGVEIDQKITDLAGEYFDEPADIPVTTYDGRAWLAASHDKYDVIMVDAYQDITIPFQMSSTEFFTMVREHLNPGGVMVVNMNMISDGQGSINEALSDTIASVFGNGNTLTADVPNTTNRELFAKKPGSGSEENSMQQASKALNLRETTYERTGSEDLEWYMEEVASRFRKVNEPDSASTILTDDKAPVEVLGMHAIDQIIADEAGPYRQILKDEGFGGLLRAVQ</sequence>
<dbReference type="EC" id="2.5.1.16"/>
<dbReference type="EMBL" id="AE014295">
    <property type="protein sequence ID" value="AAN25165.1"/>
    <property type="molecule type" value="Genomic_DNA"/>
</dbReference>
<dbReference type="RefSeq" id="NP_696529.1">
    <property type="nucleotide sequence ID" value="NC_004307.2"/>
</dbReference>
<dbReference type="SMR" id="Q8G4L4"/>
<dbReference type="STRING" id="206672.BL1365"/>
<dbReference type="EnsemblBacteria" id="AAN25165">
    <property type="protein sequence ID" value="AAN25165"/>
    <property type="gene ID" value="BL1365"/>
</dbReference>
<dbReference type="KEGG" id="blo:BL1365"/>
<dbReference type="PATRIC" id="fig|206672.9.peg.223"/>
<dbReference type="HOGENOM" id="CLU_049703_0_0_11"/>
<dbReference type="OrthoDB" id="9761985at2"/>
<dbReference type="UniPathway" id="UPA00248">
    <property type="reaction ID" value="UER00314"/>
</dbReference>
<dbReference type="Proteomes" id="UP000000439">
    <property type="component" value="Chromosome"/>
</dbReference>
<dbReference type="GO" id="GO:0005737">
    <property type="term" value="C:cytoplasm"/>
    <property type="evidence" value="ECO:0007669"/>
    <property type="project" value="UniProtKB-SubCell"/>
</dbReference>
<dbReference type="GO" id="GO:0004766">
    <property type="term" value="F:spermidine synthase activity"/>
    <property type="evidence" value="ECO:0007669"/>
    <property type="project" value="UniProtKB-EC"/>
</dbReference>
<dbReference type="GO" id="GO:0008295">
    <property type="term" value="P:spermidine biosynthetic process"/>
    <property type="evidence" value="ECO:0007669"/>
    <property type="project" value="UniProtKB-UniPathway"/>
</dbReference>
<dbReference type="CDD" id="cd02440">
    <property type="entry name" value="AdoMet_MTases"/>
    <property type="match status" value="1"/>
</dbReference>
<dbReference type="Gene3D" id="3.40.50.150">
    <property type="entry name" value="Vaccinia Virus protein VP39"/>
    <property type="match status" value="1"/>
</dbReference>
<dbReference type="InterPro" id="IPR030374">
    <property type="entry name" value="PABS"/>
</dbReference>
<dbReference type="InterPro" id="IPR029063">
    <property type="entry name" value="SAM-dependent_MTases_sf"/>
</dbReference>
<dbReference type="NCBIfam" id="NF037959">
    <property type="entry name" value="MFS_SpdSyn"/>
    <property type="match status" value="1"/>
</dbReference>
<dbReference type="PANTHER" id="PTHR43317">
    <property type="entry name" value="THERMOSPERMINE SYNTHASE ACAULIS5"/>
    <property type="match status" value="1"/>
</dbReference>
<dbReference type="PANTHER" id="PTHR43317:SF1">
    <property type="entry name" value="THERMOSPERMINE SYNTHASE ACAULIS5"/>
    <property type="match status" value="1"/>
</dbReference>
<dbReference type="Pfam" id="PF01564">
    <property type="entry name" value="Spermine_synth"/>
    <property type="match status" value="1"/>
</dbReference>
<dbReference type="SUPFAM" id="SSF53335">
    <property type="entry name" value="S-adenosyl-L-methionine-dependent methyltransferases"/>
    <property type="match status" value="1"/>
</dbReference>
<dbReference type="PROSITE" id="PS51006">
    <property type="entry name" value="PABS_2"/>
    <property type="match status" value="1"/>
</dbReference>
<protein>
    <recommendedName>
        <fullName>Probable polyamine aminopropyl transferase</fullName>
    </recommendedName>
    <alternativeName>
        <fullName>Putrescine aminopropyltransferase</fullName>
        <shortName>PAPT</shortName>
    </alternativeName>
    <alternativeName>
        <fullName>Spermidine synthase</fullName>
        <shortName>SPDS</shortName>
        <shortName>SPDSY</shortName>
        <ecNumber>2.5.1.16</ecNumber>
    </alternativeName>
</protein>
<comment type="function">
    <text evidence="1">Catalyzes the irreversible transfer of a propylamine group from the amino donor S-adenosylmethioninamine (decarboxy-AdoMet) to putrescine (1,4-diaminobutane) to yield spermidine.</text>
</comment>
<comment type="catalytic activity">
    <reaction>
        <text>S-adenosyl 3-(methylsulfanyl)propylamine + putrescine = S-methyl-5'-thioadenosine + spermidine + H(+)</text>
        <dbReference type="Rhea" id="RHEA:12721"/>
        <dbReference type="ChEBI" id="CHEBI:15378"/>
        <dbReference type="ChEBI" id="CHEBI:17509"/>
        <dbReference type="ChEBI" id="CHEBI:57443"/>
        <dbReference type="ChEBI" id="CHEBI:57834"/>
        <dbReference type="ChEBI" id="CHEBI:326268"/>
        <dbReference type="EC" id="2.5.1.16"/>
    </reaction>
</comment>
<comment type="pathway">
    <text>Amine and polyamine biosynthesis; spermidine biosynthesis; spermidine from putrescine: step 1/1.</text>
</comment>
<comment type="subunit">
    <text evidence="1">Homodimer or homotetramer.</text>
</comment>
<comment type="subcellular location">
    <subcellularLocation>
        <location evidence="1">Cytoplasm</location>
    </subcellularLocation>
</comment>
<comment type="similarity">
    <text evidence="4">Belongs to the spermidine/spermine synthase family.</text>
</comment>
<feature type="chain" id="PRO_0000156471" description="Probable polyamine aminopropyl transferase">
    <location>
        <begin position="1"/>
        <end position="446"/>
    </location>
</feature>
<feature type="domain" description="PABS" evidence="2">
    <location>
        <begin position="116"/>
        <end position="351"/>
    </location>
</feature>
<feature type="region of interest" description="Unknown">
    <location>
        <begin position="1"/>
        <end position="117"/>
    </location>
</feature>
<feature type="region of interest" description="Disordered" evidence="3">
    <location>
        <begin position="64"/>
        <end position="94"/>
    </location>
</feature>
<feature type="region of interest" description="Spermidine synthase">
    <location>
        <begin position="118"/>
        <end position="353"/>
    </location>
</feature>
<feature type="compositionally biased region" description="Polar residues" evidence="3">
    <location>
        <begin position="75"/>
        <end position="94"/>
    </location>
</feature>
<feature type="active site" description="Proton acceptor" evidence="2">
    <location>
        <position position="269"/>
    </location>
</feature>
<feature type="binding site" evidence="1">
    <location>
        <position position="147"/>
    </location>
    <ligand>
        <name>S-methyl-5'-thioadenosine</name>
        <dbReference type="ChEBI" id="CHEBI:17509"/>
    </ligand>
</feature>
<feature type="binding site" evidence="1">
    <location>
        <position position="226"/>
    </location>
    <ligand>
        <name>S-methyl-5'-thioadenosine</name>
        <dbReference type="ChEBI" id="CHEBI:17509"/>
    </ligand>
</feature>
<feature type="binding site" evidence="1">
    <location>
        <begin position="251"/>
        <end position="252"/>
    </location>
    <ligand>
        <name>S-methyl-5'-thioadenosine</name>
        <dbReference type="ChEBI" id="CHEBI:17509"/>
    </ligand>
</feature>
<name>SPEE_BIFLO</name>